<name>CLU_ARATH</name>
<gene>
    <name evidence="7" type="primary">FMT</name>
    <name evidence="9" type="synonym">CLU</name>
    <name evidence="10" type="ordered locus">At3g52140</name>
    <name evidence="11" type="ORF">F4F15.250</name>
</gene>
<comment type="function">
    <text evidence="2 5 6">mRNA-binding protein involved in proper cytoplasmic distribution of mitochondria (By similarity) (PubMed:14617080). Together with REC2, REC3 and FMT/CLU, contributes to the establishment of the cellular volume devoted to the chloroplast compartment (PubMed:26862170).</text>
</comment>
<comment type="subcellular location">
    <subcellularLocation>
        <location evidence="2">Cytoplasm</location>
    </subcellularLocation>
</comment>
<comment type="alternative products">
    <event type="alternative splicing"/>
    <isoform>
        <id>F4J5S1-1</id>
        <name>1</name>
        <sequence type="displayed"/>
    </isoform>
    <isoform>
        <id>F4J5S1-2</id>
        <name>2</name>
        <sequence type="described" ref="VSP_044168"/>
    </isoform>
</comment>
<comment type="disruption phenotype">
    <text evidence="5 6">Causes mitochondria to cluster within cells (PubMed:14617080). Reduced proportion of the cellular volume devoted to chloroplasts leading to an abnormal chloroplasts distributions (PubMed:26862170). Lower levels of chlorophyll, especially in plants lacking REC1, REC2, REC3 and FMT/CLU (PubMed:26862170).</text>
</comment>
<comment type="similarity">
    <text evidence="2">Belongs to the CLU family.</text>
</comment>
<comment type="sequence caution" evidence="8">
    <conflict type="erroneous gene model prediction">
        <sequence resource="EMBL-CDS" id="CAB41334"/>
    </conflict>
</comment>
<proteinExistence type="evidence at transcript level"/>
<reference key="1">
    <citation type="journal article" date="2000" name="Nature">
        <title>Sequence and analysis of chromosome 3 of the plant Arabidopsis thaliana.</title>
        <authorList>
            <person name="Salanoubat M."/>
            <person name="Lemcke K."/>
            <person name="Rieger M."/>
            <person name="Ansorge W."/>
            <person name="Unseld M."/>
            <person name="Fartmann B."/>
            <person name="Valle G."/>
            <person name="Bloecker H."/>
            <person name="Perez-Alonso M."/>
            <person name="Obermaier B."/>
            <person name="Delseny M."/>
            <person name="Boutry M."/>
            <person name="Grivell L.A."/>
            <person name="Mache R."/>
            <person name="Puigdomenech P."/>
            <person name="De Simone V."/>
            <person name="Choisne N."/>
            <person name="Artiguenave F."/>
            <person name="Robert C."/>
            <person name="Brottier P."/>
            <person name="Wincker P."/>
            <person name="Cattolico L."/>
            <person name="Weissenbach J."/>
            <person name="Saurin W."/>
            <person name="Quetier F."/>
            <person name="Schaefer M."/>
            <person name="Mueller-Auer S."/>
            <person name="Gabel C."/>
            <person name="Fuchs M."/>
            <person name="Benes V."/>
            <person name="Wurmbach E."/>
            <person name="Drzonek H."/>
            <person name="Erfle H."/>
            <person name="Jordan N."/>
            <person name="Bangert S."/>
            <person name="Wiedelmann R."/>
            <person name="Kranz H."/>
            <person name="Voss H."/>
            <person name="Holland R."/>
            <person name="Brandt P."/>
            <person name="Nyakatura G."/>
            <person name="Vezzi A."/>
            <person name="D'Angelo M."/>
            <person name="Pallavicini A."/>
            <person name="Toppo S."/>
            <person name="Simionati B."/>
            <person name="Conrad A."/>
            <person name="Hornischer K."/>
            <person name="Kauer G."/>
            <person name="Loehnert T.-H."/>
            <person name="Nordsiek G."/>
            <person name="Reichelt J."/>
            <person name="Scharfe M."/>
            <person name="Schoen O."/>
            <person name="Bargues M."/>
            <person name="Terol J."/>
            <person name="Climent J."/>
            <person name="Navarro P."/>
            <person name="Collado C."/>
            <person name="Perez-Perez A."/>
            <person name="Ottenwaelder B."/>
            <person name="Duchemin D."/>
            <person name="Cooke R."/>
            <person name="Laudie M."/>
            <person name="Berger-Llauro C."/>
            <person name="Purnelle B."/>
            <person name="Masuy D."/>
            <person name="de Haan M."/>
            <person name="Maarse A.C."/>
            <person name="Alcaraz J.-P."/>
            <person name="Cottet A."/>
            <person name="Casacuberta E."/>
            <person name="Monfort A."/>
            <person name="Argiriou A."/>
            <person name="Flores M."/>
            <person name="Liguori R."/>
            <person name="Vitale D."/>
            <person name="Mannhaupt G."/>
            <person name="Haase D."/>
            <person name="Schoof H."/>
            <person name="Rudd S."/>
            <person name="Zaccaria P."/>
            <person name="Mewes H.-W."/>
            <person name="Mayer K.F.X."/>
            <person name="Kaul S."/>
            <person name="Town C.D."/>
            <person name="Koo H.L."/>
            <person name="Tallon L.J."/>
            <person name="Jenkins J."/>
            <person name="Rooney T."/>
            <person name="Rizzo M."/>
            <person name="Walts A."/>
            <person name="Utterback T."/>
            <person name="Fujii C.Y."/>
            <person name="Shea T.P."/>
            <person name="Creasy T.H."/>
            <person name="Haas B."/>
            <person name="Maiti R."/>
            <person name="Wu D."/>
            <person name="Peterson J."/>
            <person name="Van Aken S."/>
            <person name="Pai G."/>
            <person name="Militscher J."/>
            <person name="Sellers P."/>
            <person name="Gill J.E."/>
            <person name="Feldblyum T.V."/>
            <person name="Preuss D."/>
            <person name="Lin X."/>
            <person name="Nierman W.C."/>
            <person name="Salzberg S.L."/>
            <person name="White O."/>
            <person name="Venter J.C."/>
            <person name="Fraser C.M."/>
            <person name="Kaneko T."/>
            <person name="Nakamura Y."/>
            <person name="Sato S."/>
            <person name="Kato T."/>
            <person name="Asamizu E."/>
            <person name="Sasamoto S."/>
            <person name="Kimura T."/>
            <person name="Idesawa K."/>
            <person name="Kawashima K."/>
            <person name="Kishida Y."/>
            <person name="Kiyokawa C."/>
            <person name="Kohara M."/>
            <person name="Matsumoto M."/>
            <person name="Matsuno A."/>
            <person name="Muraki A."/>
            <person name="Nakayama S."/>
            <person name="Nakazaki N."/>
            <person name="Shinpo S."/>
            <person name="Takeuchi C."/>
            <person name="Wada T."/>
            <person name="Watanabe A."/>
            <person name="Yamada M."/>
            <person name="Yasuda M."/>
            <person name="Tabata S."/>
        </authorList>
    </citation>
    <scope>NUCLEOTIDE SEQUENCE [LARGE SCALE GENOMIC DNA]</scope>
    <source>
        <strain>cv. Columbia</strain>
    </source>
</reference>
<reference key="2">
    <citation type="journal article" date="2017" name="Plant J.">
        <title>Araport11: a complete reannotation of the Arabidopsis thaliana reference genome.</title>
        <authorList>
            <person name="Cheng C.Y."/>
            <person name="Krishnakumar V."/>
            <person name="Chan A.P."/>
            <person name="Thibaud-Nissen F."/>
            <person name="Schobel S."/>
            <person name="Town C.D."/>
        </authorList>
    </citation>
    <scope>GENOME REANNOTATION</scope>
    <source>
        <strain>cv. Columbia</strain>
    </source>
</reference>
<reference key="3">
    <citation type="journal article" date="2004" name="Genome Res.">
        <title>Whole genome sequence comparisons and 'full-length' cDNA sequences: a combined approach to evaluate and improve Arabidopsis genome annotation.</title>
        <authorList>
            <person name="Castelli V."/>
            <person name="Aury J.-M."/>
            <person name="Jaillon O."/>
            <person name="Wincker P."/>
            <person name="Clepet C."/>
            <person name="Menard M."/>
            <person name="Cruaud C."/>
            <person name="Quetier F."/>
            <person name="Scarpelli C."/>
            <person name="Schaechter V."/>
            <person name="Temple G."/>
            <person name="Caboche M."/>
            <person name="Weissenbach J."/>
            <person name="Salanoubat M."/>
        </authorList>
    </citation>
    <scope>NUCLEOTIDE SEQUENCE [LARGE SCALE MRNA] OF 952-1407</scope>
    <source>
        <strain>cv. Columbia</strain>
    </source>
</reference>
<reference key="4">
    <citation type="journal article" date="2003" name="Plant J.">
        <title>The genetic control of plant mitochondrial morphology and dynamics.</title>
        <authorList>
            <person name="Logan D.C."/>
            <person name="Scott I."/>
            <person name="Tobin A.K."/>
        </authorList>
    </citation>
    <scope>FUNCTION</scope>
    <scope>DISRUPTION PHENOTYPE</scope>
</reference>
<reference key="5">
    <citation type="journal article" date="2016" name="Proc. Natl. Acad. Sci. U.S.A.">
        <title>REDUCED CHLOROPLAST COVERAGE genes from Arabidopsis thaliana help to establish the size of the chloroplast compartment.</title>
        <authorList>
            <person name="Larkin R.M."/>
            <person name="Stefano G."/>
            <person name="Ruckle M.E."/>
            <person name="Stavoe A.K."/>
            <person name="Sinkler C.A."/>
            <person name="Brandizzi F."/>
            <person name="Malmstrom C.M."/>
            <person name="Osteryoung K.W."/>
        </authorList>
    </citation>
    <scope>FUNCTION</scope>
    <scope>DISRUPTION PHENOTYPE</scope>
</reference>
<protein>
    <recommendedName>
        <fullName evidence="9">Clustered mitochondria protein</fullName>
    </recommendedName>
    <alternativeName>
        <fullName evidence="7">Friendly mitochondria protein</fullName>
    </alternativeName>
</protein>
<sequence length="1407" mass="153689">MAGKSNKSKAKRAAQSTTTNSTTDVKSDAPAPPVAATVPATAPVTAAAAPVATAAAPVTAPDNGTLTAVDSAVPEANEVAPTIPKADESESQVENNDAQPKQGELRLYPVSVKTQSGGKMELQLNPGDSVMDIRQFLLDAPETCYFTCYELLLRNKDGETHHLEDYNEISEVADITIGGCSLEMVAALYDDRSIRAHVHRARDLLSLSTLHSSLSTTLALQYDAALNKVQNPGDKPKSDVPELECLGFMEDVPGSLKKLINSTSEEIRSVENIVFSSFNPPPSHRRLVGDLIYLDVVTLEGNKYCITGTTKTFYVNSSSGNILDPRPSKSGFEAATLIGLLQKLSSKFKKAFREVMEKKASAHPFENVQSLLPPHSWLRTYPVPDHKRDAARAEEALTISYGSELIGMQRDWNEELQSCREFPHTSPQERILRDRALYKVSSDFVDAALNGAIGVISRCIPPINPTDPECLHMYVHNNIFFSFAVDADIEQLSKKRPSNQMTEKVSSSEKVSCTEGTCDNEEHNNCNEAPLVENEQATYASANNDLKGTKLYQEADVPGLYNLAMAIIDYRGHRVVAQSVLPGILQGDKSDALLYGSVDNGKKICWNEDFHAKVLEAAKLLHIKEHSVIDASETVFKLAAPVECKGIVGSDNRHYLLDLMRVTPRDANYTGPESRFCVLRPELITSFCQAESLEKSKFKTKADEGGDDSSNVSADTSKVGDALIDGEANGASNSDQKSISDKQNTTAEDYAAGSSESSKSCDQIAFNPNVFTDFTLGGNQEEIAADEENVKKVSSYLVDVVLPKFIEDLCTLEVSPMDGQTLTEALHAHGVNVRYIGRVANGVKHLPHLWDLCLNEITVRSAKHILKDILRDIEDHDIGSAVSHFLNCFFGNYQTAGGKASANSSTAKNQKKFFGADQPITKKGQGRGKGKASSKKSFSSYMMVDSNILWSDIQEFAKAKYEFELPELSRTTAKKVSVLRNLCQKVGVSIAARKYDFSANTPFETSDILDLRPVIKHSVPVCSEAKDLVEMGKVQLAEGMLSESYTFFSEAFSILQQVTGPMHREVANCCRYLAMVLYHAGDMAGAIMQQHKELIINERCLGLDHPDTAHSYGNMALFYHGLNQTELALQNMGRALLLLGLSSGPDHPDVAATFINVAMMYQDMGKMDTALRYLQEALKKNERLLGPEHIQTAVCYHALAIAFNCMGAFKLSHQHEKKTYDILVKQLGDDDSRTRDSLNWMKTFKMRELQMTAQKQKGQAANAANTQKAIDLLKAHPDLIHAFQNAAATGRTNALNSAVLGETQPRGRGFDERAARAAAEVRKKAAAKGLLVRPQGGVPVQAMPPLSQLQNMINTATVSSEKGGENGEAKVQEKKESSENGKTENLAPAGLGAGLTSLDKKKQKAKK</sequence>
<feature type="chain" id="PRO_0000419436" description="Clustered mitochondria protein">
    <location>
        <begin position="1"/>
        <end position="1407"/>
    </location>
</feature>
<feature type="domain" description="Clu" evidence="3">
    <location>
        <begin position="384"/>
        <end position="670"/>
    </location>
</feature>
<feature type="repeat" description="TPR 1" evidence="1">
    <location>
        <begin position="1025"/>
        <end position="1058"/>
    </location>
</feature>
<feature type="repeat" description="TPR 2" evidence="1">
    <location>
        <begin position="1067"/>
        <end position="1100"/>
    </location>
</feature>
<feature type="repeat" description="TPR 3" evidence="1">
    <location>
        <begin position="1109"/>
        <end position="1142"/>
    </location>
</feature>
<feature type="repeat" description="TPR 4" evidence="1">
    <location>
        <begin position="1151"/>
        <end position="1184"/>
    </location>
</feature>
<feature type="repeat" description="TPR 5" evidence="1">
    <location>
        <begin position="1193"/>
        <end position="1226"/>
    </location>
</feature>
<feature type="region of interest" description="Disordered" evidence="4">
    <location>
        <begin position="1"/>
        <end position="36"/>
    </location>
</feature>
<feature type="region of interest" description="Disordered" evidence="4">
    <location>
        <begin position="83"/>
        <end position="103"/>
    </location>
</feature>
<feature type="region of interest" description="Disordered" evidence="4">
    <location>
        <begin position="724"/>
        <end position="760"/>
    </location>
</feature>
<feature type="region of interest" description="Disordered" evidence="4">
    <location>
        <begin position="1358"/>
        <end position="1407"/>
    </location>
</feature>
<feature type="compositionally biased region" description="Basic residues" evidence="4">
    <location>
        <begin position="1"/>
        <end position="12"/>
    </location>
</feature>
<feature type="compositionally biased region" description="Polar residues" evidence="4">
    <location>
        <begin position="14"/>
        <end position="24"/>
    </location>
</feature>
<feature type="compositionally biased region" description="Polar residues" evidence="4">
    <location>
        <begin position="730"/>
        <end position="747"/>
    </location>
</feature>
<feature type="compositionally biased region" description="Basic and acidic residues" evidence="4">
    <location>
        <begin position="1362"/>
        <end position="1382"/>
    </location>
</feature>
<feature type="splice variant" id="VSP_044168" description="In isoform 2." evidence="8">
    <location>
        <begin position="913"/>
        <end position="916"/>
    </location>
</feature>
<feature type="sequence conflict" description="In Ref. 3; BX824152." evidence="8" ref="3">
    <original>R</original>
    <variation>K</variation>
    <location>
        <position position="1183"/>
    </location>
</feature>
<accession>F4J5S1</accession>
<accession>F4J5S2</accession>
<accession>Q9SUZ1</accession>
<keyword id="KW-0025">Alternative splicing</keyword>
<keyword id="KW-0963">Cytoplasm</keyword>
<keyword id="KW-1185">Reference proteome</keyword>
<keyword id="KW-0677">Repeat</keyword>
<keyword id="KW-0802">TPR repeat</keyword>
<organism>
    <name type="scientific">Arabidopsis thaliana</name>
    <name type="common">Mouse-ear cress</name>
    <dbReference type="NCBI Taxonomy" id="3702"/>
    <lineage>
        <taxon>Eukaryota</taxon>
        <taxon>Viridiplantae</taxon>
        <taxon>Streptophyta</taxon>
        <taxon>Embryophyta</taxon>
        <taxon>Tracheophyta</taxon>
        <taxon>Spermatophyta</taxon>
        <taxon>Magnoliopsida</taxon>
        <taxon>eudicotyledons</taxon>
        <taxon>Gunneridae</taxon>
        <taxon>Pentapetalae</taxon>
        <taxon>rosids</taxon>
        <taxon>malvids</taxon>
        <taxon>Brassicales</taxon>
        <taxon>Brassicaceae</taxon>
        <taxon>Camelineae</taxon>
        <taxon>Arabidopsis</taxon>
    </lineage>
</organism>
<evidence type="ECO:0000255" key="1"/>
<evidence type="ECO:0000255" key="2">
    <source>
        <dbReference type="HAMAP-Rule" id="MF_03013"/>
    </source>
</evidence>
<evidence type="ECO:0000255" key="3">
    <source>
        <dbReference type="PROSITE-ProRule" id="PRU01167"/>
    </source>
</evidence>
<evidence type="ECO:0000256" key="4">
    <source>
        <dbReference type="SAM" id="MobiDB-lite"/>
    </source>
</evidence>
<evidence type="ECO:0000269" key="5">
    <source>
    </source>
</evidence>
<evidence type="ECO:0000269" key="6">
    <source>
    </source>
</evidence>
<evidence type="ECO:0000303" key="7">
    <source>
    </source>
</evidence>
<evidence type="ECO:0000305" key="8"/>
<evidence type="ECO:0000305" key="9">
    <source>
    </source>
</evidence>
<evidence type="ECO:0000312" key="10">
    <source>
        <dbReference type="Araport" id="AT3G52140"/>
    </source>
</evidence>
<evidence type="ECO:0000312" key="11">
    <source>
        <dbReference type="EMBL" id="CAB41334.1"/>
    </source>
</evidence>
<dbReference type="EMBL" id="AL049711">
    <property type="protein sequence ID" value="CAB41334.1"/>
    <property type="status" value="ALT_SEQ"/>
    <property type="molecule type" value="Genomic_DNA"/>
</dbReference>
<dbReference type="EMBL" id="CP002686">
    <property type="protein sequence ID" value="AEE78899.1"/>
    <property type="molecule type" value="Genomic_DNA"/>
</dbReference>
<dbReference type="EMBL" id="CP002686">
    <property type="protein sequence ID" value="AEE78900.1"/>
    <property type="molecule type" value="Genomic_DNA"/>
</dbReference>
<dbReference type="EMBL" id="BX824152">
    <property type="status" value="NOT_ANNOTATED_CDS"/>
    <property type="molecule type" value="mRNA"/>
</dbReference>
<dbReference type="PIR" id="T49093">
    <property type="entry name" value="T49093"/>
</dbReference>
<dbReference type="RefSeq" id="NP_001190066.1">
    <molecule id="F4J5S1-1"/>
    <property type="nucleotide sequence ID" value="NM_001203137.1"/>
</dbReference>
<dbReference type="RefSeq" id="NP_190782.3">
    <molecule id="F4J5S1-2"/>
    <property type="nucleotide sequence ID" value="NM_115073.5"/>
</dbReference>
<dbReference type="SMR" id="F4J5S1"/>
<dbReference type="BioGRID" id="9696">
    <property type="interactions" value="6"/>
</dbReference>
<dbReference type="FunCoup" id="F4J5S1">
    <property type="interactions" value="3283"/>
</dbReference>
<dbReference type="IntAct" id="F4J5S1">
    <property type="interactions" value="1"/>
</dbReference>
<dbReference type="STRING" id="3702.F4J5S1"/>
<dbReference type="iPTMnet" id="F4J5S1"/>
<dbReference type="PaxDb" id="3702-AT3G52140.4"/>
<dbReference type="EnsemblPlants" id="AT3G52140.1">
    <molecule id="F4J5S1-2"/>
    <property type="protein sequence ID" value="AT3G52140.1"/>
    <property type="gene ID" value="AT3G52140"/>
</dbReference>
<dbReference type="EnsemblPlants" id="AT3G52140.2">
    <molecule id="F4J5S1-1"/>
    <property type="protein sequence ID" value="AT3G52140.2"/>
    <property type="gene ID" value="AT3G52140"/>
</dbReference>
<dbReference type="GeneID" id="824378"/>
<dbReference type="Gramene" id="AT3G52140.1">
    <molecule id="F4J5S1-2"/>
    <property type="protein sequence ID" value="AT3G52140.1"/>
    <property type="gene ID" value="AT3G52140"/>
</dbReference>
<dbReference type="Gramene" id="AT3G52140.2">
    <molecule id="F4J5S1-1"/>
    <property type="protein sequence ID" value="AT3G52140.2"/>
    <property type="gene ID" value="AT3G52140"/>
</dbReference>
<dbReference type="KEGG" id="ath:AT3G52140"/>
<dbReference type="Araport" id="AT3G52140"/>
<dbReference type="TAIR" id="AT3G52140">
    <property type="gene designation" value="NOXY38"/>
</dbReference>
<dbReference type="eggNOG" id="KOG1839">
    <property type="taxonomic scope" value="Eukaryota"/>
</dbReference>
<dbReference type="InParanoid" id="F4J5S1"/>
<dbReference type="OMA" id="HPVWDKD"/>
<dbReference type="CD-CODE" id="4299E36E">
    <property type="entry name" value="Nucleolus"/>
</dbReference>
<dbReference type="PRO" id="PR:F4J5S1"/>
<dbReference type="Proteomes" id="UP000006548">
    <property type="component" value="Chromosome 3"/>
</dbReference>
<dbReference type="ExpressionAtlas" id="F4J5S1">
    <property type="expression patterns" value="baseline and differential"/>
</dbReference>
<dbReference type="GO" id="GO:0005737">
    <property type="term" value="C:cytoplasm"/>
    <property type="evidence" value="ECO:0007669"/>
    <property type="project" value="UniProtKB-SubCell"/>
</dbReference>
<dbReference type="GO" id="GO:0019750">
    <property type="term" value="P:chloroplast localization"/>
    <property type="evidence" value="ECO:0000315"/>
    <property type="project" value="UniProtKB"/>
</dbReference>
<dbReference type="GO" id="GO:0007005">
    <property type="term" value="P:mitochondrion organization"/>
    <property type="evidence" value="ECO:0007669"/>
    <property type="project" value="UniProtKB-UniRule"/>
</dbReference>
<dbReference type="CDD" id="cd15466">
    <property type="entry name" value="CLU-central"/>
    <property type="match status" value="1"/>
</dbReference>
<dbReference type="FunFam" id="1.25.40.10:FF:000230">
    <property type="entry name" value="Clustered mitochondria protein homolog"/>
    <property type="match status" value="1"/>
</dbReference>
<dbReference type="FunFam" id="3.30.2280.10:FF:000002">
    <property type="entry name" value="Clustered mitochondria protein homolog"/>
    <property type="match status" value="1"/>
</dbReference>
<dbReference type="Gene3D" id="3.30.2280.10">
    <property type="entry name" value="Hypothetical protein (hspc210)"/>
    <property type="match status" value="1"/>
</dbReference>
<dbReference type="Gene3D" id="1.25.40.10">
    <property type="entry name" value="Tetratricopeptide repeat domain"/>
    <property type="match status" value="1"/>
</dbReference>
<dbReference type="HAMAP" id="MF_03013">
    <property type="entry name" value="CLU"/>
    <property type="match status" value="1"/>
</dbReference>
<dbReference type="InterPro" id="IPR033646">
    <property type="entry name" value="CLU-central"/>
</dbReference>
<dbReference type="InterPro" id="IPR025697">
    <property type="entry name" value="CLU_dom"/>
</dbReference>
<dbReference type="InterPro" id="IPR028275">
    <property type="entry name" value="CLU_N"/>
</dbReference>
<dbReference type="InterPro" id="IPR027523">
    <property type="entry name" value="CLU_prot"/>
</dbReference>
<dbReference type="InterPro" id="IPR007967">
    <property type="entry name" value="GSKIP_dom"/>
</dbReference>
<dbReference type="InterPro" id="IPR023231">
    <property type="entry name" value="GSKIP_dom_sf"/>
</dbReference>
<dbReference type="InterPro" id="IPR011990">
    <property type="entry name" value="TPR-like_helical_dom_sf"/>
</dbReference>
<dbReference type="InterPro" id="IPR019734">
    <property type="entry name" value="TPR_rpt"/>
</dbReference>
<dbReference type="PANTHER" id="PTHR12601:SF6">
    <property type="entry name" value="CLUSTERED MITOCHONDRIA PROTEIN HOMOLOG"/>
    <property type="match status" value="1"/>
</dbReference>
<dbReference type="PANTHER" id="PTHR12601">
    <property type="entry name" value="EUKARYOTIC TRANSLATION INITIATION FACTOR 3 SUBUNIT EIF-3"/>
    <property type="match status" value="1"/>
</dbReference>
<dbReference type="Pfam" id="PF13236">
    <property type="entry name" value="CLU"/>
    <property type="match status" value="1"/>
</dbReference>
<dbReference type="Pfam" id="PF15044">
    <property type="entry name" value="CLU_N"/>
    <property type="match status" value="1"/>
</dbReference>
<dbReference type="Pfam" id="PF12807">
    <property type="entry name" value="eIF3_p135"/>
    <property type="match status" value="1"/>
</dbReference>
<dbReference type="Pfam" id="PF05303">
    <property type="entry name" value="GSKIP_dom"/>
    <property type="match status" value="1"/>
</dbReference>
<dbReference type="Pfam" id="PF13424">
    <property type="entry name" value="TPR_12"/>
    <property type="match status" value="2"/>
</dbReference>
<dbReference type="SMART" id="SM00028">
    <property type="entry name" value="TPR"/>
    <property type="match status" value="3"/>
</dbReference>
<dbReference type="SUPFAM" id="SSF103107">
    <property type="entry name" value="Hypothetical protein c14orf129, hspc210"/>
    <property type="match status" value="1"/>
</dbReference>
<dbReference type="SUPFAM" id="SSF48452">
    <property type="entry name" value="TPR-like"/>
    <property type="match status" value="2"/>
</dbReference>
<dbReference type="PROSITE" id="PS51823">
    <property type="entry name" value="CLU"/>
    <property type="match status" value="1"/>
</dbReference>
<dbReference type="PROSITE" id="PS50005">
    <property type="entry name" value="TPR"/>
    <property type="match status" value="3"/>
</dbReference>
<dbReference type="PROSITE" id="PS50293">
    <property type="entry name" value="TPR_REGION"/>
    <property type="match status" value="1"/>
</dbReference>